<gene>
    <name evidence="13" type="primary">JMJ15</name>
    <name evidence="13" type="synonym">MEE27</name>
    <name evidence="14" type="synonym">PKDM7C</name>
    <name evidence="17" type="ordered locus">At2g34880</name>
    <name evidence="18" type="ORF">F19I3</name>
</gene>
<keyword id="KW-0156">Chromatin regulator</keyword>
<keyword id="KW-0223">Dioxygenase</keyword>
<keyword id="KW-0408">Iron</keyword>
<keyword id="KW-0479">Metal-binding</keyword>
<keyword id="KW-0539">Nucleus</keyword>
<keyword id="KW-0560">Oxidoreductase</keyword>
<keyword id="KW-1185">Reference proteome</keyword>
<keyword id="KW-0804">Transcription</keyword>
<keyword id="KW-0805">Transcription regulation</keyword>
<keyword id="KW-0862">Zinc</keyword>
<keyword id="KW-0863">Zinc-finger</keyword>
<accession>O64752</accession>
<protein>
    <recommendedName>
        <fullName evidence="13">Lysine-specific demethylase JMJ15</fullName>
        <ecNumber evidence="11">1.14.11.-</ecNumber>
    </recommendedName>
    <alternativeName>
        <fullName evidence="13">Jumonji domain-containing protein 15</fullName>
        <shortName evidence="13">AtJMJ15</shortName>
        <shortName evidence="13">Protein JUMONJI 15</shortName>
    </alternativeName>
    <alternativeName>
        <fullName evidence="13">Lysine-specific histone demethylase JMJ15</fullName>
    </alternativeName>
    <alternativeName>
        <fullName evidence="13">Protein MATERNAL EFFECT EMBRYO ARREST 27</fullName>
    </alternativeName>
    <alternativeName>
        <fullName evidence="15">[histone H3]-trimethyl-L-lysine(4) monodemethylase JMJ15</fullName>
    </alternativeName>
</protein>
<proteinExistence type="evidence at protein level"/>
<reference key="1">
    <citation type="journal article" date="1999" name="Nature">
        <title>Sequence and analysis of chromosome 2 of the plant Arabidopsis thaliana.</title>
        <authorList>
            <person name="Lin X."/>
            <person name="Kaul S."/>
            <person name="Rounsley S.D."/>
            <person name="Shea T.P."/>
            <person name="Benito M.-I."/>
            <person name="Town C.D."/>
            <person name="Fujii C.Y."/>
            <person name="Mason T.M."/>
            <person name="Bowman C.L."/>
            <person name="Barnstead M.E."/>
            <person name="Feldblyum T.V."/>
            <person name="Buell C.R."/>
            <person name="Ketchum K.A."/>
            <person name="Lee J.J."/>
            <person name="Ronning C.M."/>
            <person name="Koo H.L."/>
            <person name="Moffat K.S."/>
            <person name="Cronin L.A."/>
            <person name="Shen M."/>
            <person name="Pai G."/>
            <person name="Van Aken S."/>
            <person name="Umayam L."/>
            <person name="Tallon L.J."/>
            <person name="Gill J.E."/>
            <person name="Adams M.D."/>
            <person name="Carrera A.J."/>
            <person name="Creasy T.H."/>
            <person name="Goodman H.M."/>
            <person name="Somerville C.R."/>
            <person name="Copenhaver G.P."/>
            <person name="Preuss D."/>
            <person name="Nierman W.C."/>
            <person name="White O."/>
            <person name="Eisen J.A."/>
            <person name="Salzberg S.L."/>
            <person name="Fraser C.M."/>
            <person name="Venter J.C."/>
        </authorList>
    </citation>
    <scope>NUCLEOTIDE SEQUENCE [LARGE SCALE GENOMIC DNA]</scope>
    <source>
        <strain>cv. Columbia</strain>
    </source>
</reference>
<reference key="2">
    <citation type="journal article" date="2017" name="Plant J.">
        <title>Araport11: a complete reannotation of the Arabidopsis thaliana reference genome.</title>
        <authorList>
            <person name="Cheng C.Y."/>
            <person name="Krishnakumar V."/>
            <person name="Chan A.P."/>
            <person name="Thibaud-Nissen F."/>
            <person name="Schobel S."/>
            <person name="Town C.D."/>
        </authorList>
    </citation>
    <scope>GENOME REANNOTATION</scope>
    <source>
        <strain>cv. Columbia</strain>
    </source>
</reference>
<reference key="3">
    <citation type="journal article" date="2008" name="J. Integr. Plant Biol.">
        <title>Comparative analysis of JmjC domain-containing proteins reveals the potential histone demethylases in Arabidopsis and rice.</title>
        <authorList>
            <person name="Lu F."/>
            <person name="Li G."/>
            <person name="Cui X."/>
            <person name="Liu C."/>
            <person name="Wang X.-J."/>
            <person name="Cao X."/>
        </authorList>
    </citation>
    <scope>GENE FAMILY</scope>
    <scope>NOMENCLATURE</scope>
    <scope>TISSUE SPECIFICITY</scope>
</reference>
<reference key="4">
    <citation type="journal article" date="2010" name="Plant J.">
        <title>A plant-specific histone H3 lysine 4 demethylase represses the floral transition in Arabidopsis.</title>
        <authorList>
            <person name="Yang W."/>
            <person name="Jiang D."/>
            <person name="Jiang J."/>
            <person name="He Y."/>
        </authorList>
    </citation>
    <scope>DISRUPTION PHENOTYPE</scope>
</reference>
<reference key="5">
    <citation type="journal article" date="2012" name="Plant Cell Rep.">
        <title>Overexpression of a histone H3K4 demethylase, JMJ15, accelerates flowering time in Arabidopsis.</title>
        <authorList>
            <person name="Yang H."/>
            <person name="Mo H."/>
            <person name="Fan D."/>
            <person name="Cao Y."/>
            <person name="Cui S."/>
            <person name="Ma L."/>
        </authorList>
    </citation>
    <scope>FUNCTION</scope>
    <scope>CATALYTIC ACTIVITY</scope>
    <scope>TISSUE SPECIFICITY</scope>
    <scope>DISRUPTION PHENOTYPE</scope>
</reference>
<reference key="6">
    <citation type="journal article" date="2014" name="Front. Plant Sci.">
        <title>Over-expression of histone H3K4 demethylase gene JMJ15 enhances salt tolerance in Arabidopsis.</title>
        <authorList>
            <person name="Shen Y."/>
            <person name="Conde E Silva N."/>
            <person name="Audonnet L."/>
            <person name="Servet C."/>
            <person name="Wei W."/>
            <person name="Zhou D.-X."/>
        </authorList>
    </citation>
    <scope>FUNCTION</scope>
    <scope>DISRUPTION PHENOTYPE</scope>
    <scope>TISSUE SPECIFICITY</scope>
    <scope>DEVELOPMENTAL STAGE</scope>
    <scope>INDUCTION BY SALT</scope>
    <source>
        <strain>cv. Columbia</strain>
    </source>
</reference>
<comment type="function">
    <text evidence="11 12">Histone demethylase that demethylates 'Lys-4' (H3K4me) of histone H3 with a specific activity for H3K4me3 (PubMed:22555401). No activity on H3K4me2, H3K4me1, H3K9me3/2, H3K27me3/2 and H3K36me3/2 (PubMed:22555401). Involved in the control of flowering time by demethylating H3K4me3 at the FLC locus and repressing its expression (PubMed:22555401). The repression of FLC level and reduction in H3K4me3 at the FLC locus results in induction of the flowering activator FT, which is a downstream target of FLC (PubMed:22555401). Promotes salt tolerance by down-regulating the expression of several transcriptions factors involved in stress responses via H3K4me3 and H3K4me2 demethylation (PubMed:25009544).</text>
</comment>
<comment type="catalytic activity">
    <reaction evidence="11">
        <text>N(6),N(6),N(6)-trimethyl-L-lysyl(4)-[histone H3] + 2-oxoglutarate + O2 = N(6),N(6)-dimethyl-L-lysyl(4)-[histone H3] + formaldehyde + succinate + CO2</text>
        <dbReference type="Rhea" id="RHEA:60212"/>
        <dbReference type="Rhea" id="RHEA-COMP:15537"/>
        <dbReference type="Rhea" id="RHEA-COMP:15540"/>
        <dbReference type="ChEBI" id="CHEBI:15379"/>
        <dbReference type="ChEBI" id="CHEBI:16526"/>
        <dbReference type="ChEBI" id="CHEBI:16810"/>
        <dbReference type="ChEBI" id="CHEBI:16842"/>
        <dbReference type="ChEBI" id="CHEBI:30031"/>
        <dbReference type="ChEBI" id="CHEBI:61961"/>
        <dbReference type="ChEBI" id="CHEBI:61976"/>
    </reaction>
    <physiologicalReaction direction="left-to-right" evidence="11">
        <dbReference type="Rhea" id="RHEA:60213"/>
    </physiologicalReaction>
</comment>
<comment type="cofactor">
    <cofactor evidence="1">
        <name>Fe(2+)</name>
        <dbReference type="ChEBI" id="CHEBI:29033"/>
    </cofactor>
    <text evidence="1">Binds 1 Fe(2+) ion per subunit.</text>
</comment>
<comment type="subcellular location">
    <subcellularLocation>
        <location evidence="3 5">Nucleus</location>
    </subcellularLocation>
</comment>
<comment type="tissue specificity">
    <text evidence="9 11 12">Expressed in roots, cotyledons, shoot apex, rosette and cauline leaves, stems, inflorescences and siliques (PubMed:18713399). Expressed at low levels during vegetative growth but to higher levels in young floral organs (PubMed:25009544).</text>
</comment>
<comment type="developmental stage">
    <text evidence="12">In seedlings, confined at the base of rosette leaves and in root vascular tissues (PubMed:25009544). Accumulates in pericycle cells precursors of lateral root meristems and remains at the base of growing lateral roots, but not in tips (PubMed:25009544). In the inflorescence, strongly expressed in young anthers and present in carpels (PubMed:25009544). Fades out in mature flowers (PubMed:25009544).</text>
</comment>
<comment type="induction">
    <text evidence="12">Slightly induced by salt.</text>
</comment>
<comment type="disruption phenotype">
    <text evidence="10 11 12">No visible phenotype under normal growth conditions (PubMed:20202164, PubMed:22555401, PubMed:25009544). Increased sensitivity to salt (PubMed:25009544).</text>
</comment>
<comment type="miscellaneous">
    <text evidence="16">Plants over-expressing JMJ15 show early flowering phenotype.</text>
</comment>
<comment type="similarity">
    <text evidence="15">Belongs to the JARID1 histone demethylase family.</text>
</comment>
<name>JMJ15_ARATH</name>
<organism>
    <name type="scientific">Arabidopsis thaliana</name>
    <name type="common">Mouse-ear cress</name>
    <dbReference type="NCBI Taxonomy" id="3702"/>
    <lineage>
        <taxon>Eukaryota</taxon>
        <taxon>Viridiplantae</taxon>
        <taxon>Streptophyta</taxon>
        <taxon>Embryophyta</taxon>
        <taxon>Tracheophyta</taxon>
        <taxon>Spermatophyta</taxon>
        <taxon>Magnoliopsida</taxon>
        <taxon>eudicotyledons</taxon>
        <taxon>Gunneridae</taxon>
        <taxon>Pentapetalae</taxon>
        <taxon>rosids</taxon>
        <taxon>malvids</taxon>
        <taxon>Brassicales</taxon>
        <taxon>Brassicaceae</taxon>
        <taxon>Camelineae</taxon>
        <taxon>Arabidopsis</taxon>
    </lineage>
</organism>
<sequence>MEPFSAAQNKEDKDTSVEPPRRRCHRKNKGTNVEPPSSPYHPKVLARWDPANEKRPDIGEAPVFHPTSEEFEDTLAYIEKIRPLAESFGICRIVPPSNWSPPCRLKGDSIWKNKNFPTRVQFVDLLQNRGPVKKKTPKGRKRKRGKYSRTVAPKKRNGSVSKSVSTPKATEEENFGFESGPEFTLEKFEKYAQDFKDSYFERKDNVGDPSVEEIEGEYWRIIEKETNEVKVLYGTDLENPILGSGFSKGVKIPTRRNDMDKYISSGWNLNNLARLQGSLLSFEDCEISGVQVPWLYVGMCFSTFCWHVEDNHLYSLNYHHFGEPKVWYGVPGSHATGLEKAMRKHLPDLFDEQPDLLHELVTQFSPTILKNEGVPVYRAVQNAGEYVLTFPRAYHSGFNCGFNCAEAVNVAPVDWLAHGQNAVEIYSQETRKTSLSHDKILLGAAFEAVKSLSAHGEDNTKRFSWKRFCGKDGIITKAIEARLRMEEKRIEALGNGFSLVKMDKDFDSNCERECISCFSDLHLSATGCKNCSSLEEYGCTKHDICSCEGKDRFIFLRYTIDELSSLVRALEGESDDLKAWLSKVMEGCSETQKGESSGIIVKEKQVQEECFDLNGECNKSSEICEDASIMDLAAYHVEPINLGFLVVGKLWCNKHAIFPKGFKSRVKFYNVQDPMRISYYVSEIVDAGLLGPLFKVTLEESQDESFSYASPQKCWEMVLLRVKEEIMRRSNQKQDVHMLESIDGLKMFGFRSPFIVQATEALDPNHGQVEYWNHKNEKDSLEMKDCFMSNSSQSLSKARLFGVDLN</sequence>
<evidence type="ECO:0000250" key="1">
    <source>
        <dbReference type="UniProtKB" id="Q8GUI6"/>
    </source>
</evidence>
<evidence type="ECO:0000255" key="2"/>
<evidence type="ECO:0000255" key="3">
    <source>
        <dbReference type="PROSITE-ProRule" id="PRU00537"/>
    </source>
</evidence>
<evidence type="ECO:0000255" key="4">
    <source>
        <dbReference type="PROSITE-ProRule" id="PRU00538"/>
    </source>
</evidence>
<evidence type="ECO:0000255" key="5">
    <source>
        <dbReference type="PROSITE-ProRule" id="PRU00768"/>
    </source>
</evidence>
<evidence type="ECO:0000255" key="6">
    <source>
        <dbReference type="PROSITE-ProRule" id="PRU00875"/>
    </source>
</evidence>
<evidence type="ECO:0000255" key="7">
    <source>
        <dbReference type="PROSITE-ProRule" id="PRU00876"/>
    </source>
</evidence>
<evidence type="ECO:0000256" key="8">
    <source>
        <dbReference type="SAM" id="MobiDB-lite"/>
    </source>
</evidence>
<evidence type="ECO:0000269" key="9">
    <source>
    </source>
</evidence>
<evidence type="ECO:0000269" key="10">
    <source>
    </source>
</evidence>
<evidence type="ECO:0000269" key="11">
    <source>
    </source>
</evidence>
<evidence type="ECO:0000269" key="12">
    <source>
    </source>
</evidence>
<evidence type="ECO:0000303" key="13">
    <source>
    </source>
</evidence>
<evidence type="ECO:0000303" key="14">
    <source>
    </source>
</evidence>
<evidence type="ECO:0000305" key="15"/>
<evidence type="ECO:0000305" key="16">
    <source>
    </source>
</evidence>
<evidence type="ECO:0000312" key="17">
    <source>
        <dbReference type="Araport" id="AT2G34880"/>
    </source>
</evidence>
<evidence type="ECO:0000312" key="18">
    <source>
        <dbReference type="EMBL" id="AAC12829.1"/>
    </source>
</evidence>
<feature type="chain" id="PRO_0000429994" description="Lysine-specific demethylase JMJ15">
    <location>
        <begin position="1"/>
        <end position="806"/>
    </location>
</feature>
<feature type="domain" description="JmjN" evidence="3">
    <location>
        <begin position="61"/>
        <end position="102"/>
    </location>
</feature>
<feature type="domain" description="JmjC" evidence="4">
    <location>
        <begin position="261"/>
        <end position="427"/>
    </location>
</feature>
<feature type="domain" description="FYR N-terminal" evidence="6">
    <location>
        <begin position="629"/>
        <end position="687"/>
    </location>
</feature>
<feature type="domain" description="FYR C-terminal" evidence="7">
    <location>
        <begin position="689"/>
        <end position="775"/>
    </location>
</feature>
<feature type="zinc finger region" description="C5HC2" evidence="2">
    <location>
        <begin position="514"/>
        <end position="566"/>
    </location>
</feature>
<feature type="region of interest" description="Disordered" evidence="8">
    <location>
        <begin position="1"/>
        <end position="43"/>
    </location>
</feature>
<feature type="region of interest" description="Disordered" evidence="8">
    <location>
        <begin position="128"/>
        <end position="176"/>
    </location>
</feature>
<feature type="short sequence motif" description="Nuclear localization signal" evidence="5">
    <location>
        <begin position="132"/>
        <end position="139"/>
    </location>
</feature>
<feature type="compositionally biased region" description="Basic and acidic residues" evidence="8">
    <location>
        <begin position="9"/>
        <end position="21"/>
    </location>
</feature>
<feature type="compositionally biased region" description="Basic residues" evidence="8">
    <location>
        <begin position="131"/>
        <end position="157"/>
    </location>
</feature>
<feature type="compositionally biased region" description="Polar residues" evidence="8">
    <location>
        <begin position="158"/>
        <end position="168"/>
    </location>
</feature>
<feature type="binding site" evidence="4">
    <location>
        <position position="307"/>
    </location>
    <ligand>
        <name>Fe cation</name>
        <dbReference type="ChEBI" id="CHEBI:24875"/>
        <note>catalytic</note>
    </ligand>
</feature>
<feature type="binding site" evidence="4">
    <location>
        <position position="309"/>
    </location>
    <ligand>
        <name>Fe cation</name>
        <dbReference type="ChEBI" id="CHEBI:24875"/>
        <note>catalytic</note>
    </ligand>
</feature>
<feature type="binding site" evidence="4">
    <location>
        <position position="395"/>
    </location>
    <ligand>
        <name>Fe cation</name>
        <dbReference type="ChEBI" id="CHEBI:24875"/>
        <note>catalytic</note>
    </ligand>
</feature>
<feature type="binding site" evidence="1">
    <location>
        <position position="514"/>
    </location>
    <ligand>
        <name>Zn(2+)</name>
        <dbReference type="ChEBI" id="CHEBI:29105"/>
        <label>1</label>
    </ligand>
</feature>
<feature type="binding site" evidence="1">
    <location>
        <position position="517"/>
    </location>
    <ligand>
        <name>Zn(2+)</name>
        <dbReference type="ChEBI" id="CHEBI:29105"/>
        <label>1</label>
    </ligand>
</feature>
<feature type="binding site" evidence="1">
    <location>
        <position position="528"/>
    </location>
    <ligand>
        <name>Zn(2+)</name>
        <dbReference type="ChEBI" id="CHEBI:29105"/>
        <label>2</label>
    </ligand>
</feature>
<feature type="binding site" evidence="1">
    <location>
        <position position="531"/>
    </location>
    <ligand>
        <name>Zn(2+)</name>
        <dbReference type="ChEBI" id="CHEBI:29105"/>
        <label>2</label>
    </ligand>
</feature>
<feature type="binding site" evidence="1">
    <location>
        <position position="539"/>
    </location>
    <ligand>
        <name>Zn(2+)</name>
        <dbReference type="ChEBI" id="CHEBI:29105"/>
        <label>1</label>
    </ligand>
</feature>
<feature type="binding site" evidence="1">
    <location>
        <position position="542"/>
    </location>
    <ligand>
        <name>Zn(2+)</name>
        <dbReference type="ChEBI" id="CHEBI:29105"/>
        <label>1</label>
    </ligand>
</feature>
<feature type="binding site" evidence="1">
    <location>
        <position position="545"/>
    </location>
    <ligand>
        <name>Zn(2+)</name>
        <dbReference type="ChEBI" id="CHEBI:29105"/>
        <label>2</label>
    </ligand>
</feature>
<feature type="binding site" evidence="1">
    <location>
        <position position="547"/>
    </location>
    <ligand>
        <name>Zn(2+)</name>
        <dbReference type="ChEBI" id="CHEBI:29105"/>
        <label>2</label>
    </ligand>
</feature>
<dbReference type="EC" id="1.14.11.-" evidence="11"/>
<dbReference type="EMBL" id="AC004238">
    <property type="protein sequence ID" value="AAC12829.1"/>
    <property type="molecule type" value="Genomic_DNA"/>
</dbReference>
<dbReference type="EMBL" id="CP002685">
    <property type="protein sequence ID" value="AEC09034.1"/>
    <property type="molecule type" value="Genomic_DNA"/>
</dbReference>
<dbReference type="PIR" id="T00470">
    <property type="entry name" value="T00470"/>
</dbReference>
<dbReference type="RefSeq" id="NP_181034.1">
    <property type="nucleotide sequence ID" value="NM_129041.1"/>
</dbReference>
<dbReference type="SMR" id="O64752"/>
<dbReference type="FunCoup" id="O64752">
    <property type="interactions" value="172"/>
</dbReference>
<dbReference type="STRING" id="3702.O64752"/>
<dbReference type="iPTMnet" id="O64752"/>
<dbReference type="PaxDb" id="3702-AT2G34880.1"/>
<dbReference type="ProteomicsDB" id="232268"/>
<dbReference type="EnsemblPlants" id="AT2G34880.1">
    <property type="protein sequence ID" value="AT2G34880.1"/>
    <property type="gene ID" value="AT2G34880"/>
</dbReference>
<dbReference type="GeneID" id="818053"/>
<dbReference type="Gramene" id="AT2G34880.1">
    <property type="protein sequence ID" value="AT2G34880.1"/>
    <property type="gene ID" value="AT2G34880"/>
</dbReference>
<dbReference type="KEGG" id="ath:AT2G34880"/>
<dbReference type="Araport" id="AT2G34880"/>
<dbReference type="TAIR" id="AT2G34880">
    <property type="gene designation" value="MEE27"/>
</dbReference>
<dbReference type="eggNOG" id="KOG1246">
    <property type="taxonomic scope" value="Eukaryota"/>
</dbReference>
<dbReference type="HOGENOM" id="CLU_000991_8_1_1"/>
<dbReference type="InParanoid" id="O64752"/>
<dbReference type="OMA" id="WASMVRE"/>
<dbReference type="PhylomeDB" id="O64752"/>
<dbReference type="BRENDA" id="1.14.11.67">
    <property type="organism ID" value="399"/>
</dbReference>
<dbReference type="PRO" id="PR:O64752"/>
<dbReference type="Proteomes" id="UP000006548">
    <property type="component" value="Chromosome 2"/>
</dbReference>
<dbReference type="ExpressionAtlas" id="O64752">
    <property type="expression patterns" value="baseline and differential"/>
</dbReference>
<dbReference type="GO" id="GO:0005634">
    <property type="term" value="C:nucleus"/>
    <property type="evidence" value="ECO:0007669"/>
    <property type="project" value="UniProtKB-SubCell"/>
</dbReference>
<dbReference type="GO" id="GO:0034647">
    <property type="term" value="F:histone H3K4me/H3K4me2/H3K4me3 demethylase activity"/>
    <property type="evidence" value="ECO:0000314"/>
    <property type="project" value="UniProtKB"/>
</dbReference>
<dbReference type="GO" id="GO:0008270">
    <property type="term" value="F:zinc ion binding"/>
    <property type="evidence" value="ECO:0007669"/>
    <property type="project" value="UniProtKB-KW"/>
</dbReference>
<dbReference type="GO" id="GO:0009793">
    <property type="term" value="P:embryo development ending in seed dormancy"/>
    <property type="evidence" value="ECO:0000315"/>
    <property type="project" value="TAIR"/>
</dbReference>
<dbReference type="GO" id="GO:0045892">
    <property type="term" value="P:negative regulation of DNA-templated transcription"/>
    <property type="evidence" value="ECO:0000315"/>
    <property type="project" value="UniProtKB"/>
</dbReference>
<dbReference type="GO" id="GO:0045814">
    <property type="term" value="P:negative regulation of gene expression, epigenetic"/>
    <property type="evidence" value="ECO:0000315"/>
    <property type="project" value="UniProtKB"/>
</dbReference>
<dbReference type="GO" id="GO:0009555">
    <property type="term" value="P:pollen development"/>
    <property type="evidence" value="ECO:0000315"/>
    <property type="project" value="TAIR"/>
</dbReference>
<dbReference type="GO" id="GO:1901002">
    <property type="term" value="P:positive regulation of response to salt stress"/>
    <property type="evidence" value="ECO:0000315"/>
    <property type="project" value="UniProtKB"/>
</dbReference>
<dbReference type="GO" id="GO:0006355">
    <property type="term" value="P:regulation of DNA-templated transcription"/>
    <property type="evidence" value="ECO:0000304"/>
    <property type="project" value="TAIR"/>
</dbReference>
<dbReference type="GO" id="GO:0009909">
    <property type="term" value="P:regulation of flower development"/>
    <property type="evidence" value="ECO:0000314"/>
    <property type="project" value="UniProtKB"/>
</dbReference>
<dbReference type="GO" id="GO:1902074">
    <property type="term" value="P:response to salt"/>
    <property type="evidence" value="ECO:0000270"/>
    <property type="project" value="UniProtKB"/>
</dbReference>
<dbReference type="Gene3D" id="3.30.160.360">
    <property type="match status" value="1"/>
</dbReference>
<dbReference type="Gene3D" id="2.60.120.650">
    <property type="entry name" value="Cupin"/>
    <property type="match status" value="1"/>
</dbReference>
<dbReference type="InterPro" id="IPR003889">
    <property type="entry name" value="FYrich_C"/>
</dbReference>
<dbReference type="InterPro" id="IPR003888">
    <property type="entry name" value="FYrich_N"/>
</dbReference>
<dbReference type="InterPro" id="IPR003347">
    <property type="entry name" value="JmjC_dom"/>
</dbReference>
<dbReference type="InterPro" id="IPR003349">
    <property type="entry name" value="JmjN"/>
</dbReference>
<dbReference type="InterPro" id="IPR004198">
    <property type="entry name" value="Znf_C5HC2"/>
</dbReference>
<dbReference type="PANTHER" id="PTHR10694">
    <property type="entry name" value="LYSINE-SPECIFIC DEMETHYLASE"/>
    <property type="match status" value="1"/>
</dbReference>
<dbReference type="PANTHER" id="PTHR10694:SF127">
    <property type="entry name" value="LYSINE-SPECIFIC DEMETHYLASE JMJ15-RELATED"/>
    <property type="match status" value="1"/>
</dbReference>
<dbReference type="Pfam" id="PF05965">
    <property type="entry name" value="FYRC"/>
    <property type="match status" value="1"/>
</dbReference>
<dbReference type="Pfam" id="PF05964">
    <property type="entry name" value="FYRN"/>
    <property type="match status" value="1"/>
</dbReference>
<dbReference type="Pfam" id="PF02373">
    <property type="entry name" value="JmjC"/>
    <property type="match status" value="1"/>
</dbReference>
<dbReference type="Pfam" id="PF02375">
    <property type="entry name" value="JmjN"/>
    <property type="match status" value="1"/>
</dbReference>
<dbReference type="Pfam" id="PF02928">
    <property type="entry name" value="zf-C5HC2"/>
    <property type="match status" value="1"/>
</dbReference>
<dbReference type="SMART" id="SM00542">
    <property type="entry name" value="FYRC"/>
    <property type="match status" value="1"/>
</dbReference>
<dbReference type="SMART" id="SM00541">
    <property type="entry name" value="FYRN"/>
    <property type="match status" value="1"/>
</dbReference>
<dbReference type="SMART" id="SM00558">
    <property type="entry name" value="JmjC"/>
    <property type="match status" value="1"/>
</dbReference>
<dbReference type="SMART" id="SM00545">
    <property type="entry name" value="JmjN"/>
    <property type="match status" value="1"/>
</dbReference>
<dbReference type="SUPFAM" id="SSF51197">
    <property type="entry name" value="Clavaminate synthase-like"/>
    <property type="match status" value="1"/>
</dbReference>
<dbReference type="PROSITE" id="PS51543">
    <property type="entry name" value="FYRC"/>
    <property type="match status" value="1"/>
</dbReference>
<dbReference type="PROSITE" id="PS51542">
    <property type="entry name" value="FYRN"/>
    <property type="match status" value="1"/>
</dbReference>
<dbReference type="PROSITE" id="PS51184">
    <property type="entry name" value="JMJC"/>
    <property type="match status" value="1"/>
</dbReference>
<dbReference type="PROSITE" id="PS51183">
    <property type="entry name" value="JMJN"/>
    <property type="match status" value="1"/>
</dbReference>